<feature type="chain" id="PRO_0000268750" description="UPF0401 protein ECP_3853">
    <location>
        <begin position="1"/>
        <end position="77"/>
    </location>
</feature>
<sequence>MSDCHPVLLPEGPFSREQAVAVTTAYRNVLIEDDQGTHFRLVIRNAEGQLRWRCWNFEPDAGKQLNSYLASEGILRQ</sequence>
<reference key="1">
    <citation type="journal article" date="2006" name="Mol. Microbiol.">
        <title>Role of pathogenicity island-associated integrases in the genome plasticity of uropathogenic Escherichia coli strain 536.</title>
        <authorList>
            <person name="Hochhut B."/>
            <person name="Wilde C."/>
            <person name="Balling G."/>
            <person name="Middendorf B."/>
            <person name="Dobrindt U."/>
            <person name="Brzuszkiewicz E."/>
            <person name="Gottschalk G."/>
            <person name="Carniel E."/>
            <person name="Hacker J."/>
        </authorList>
    </citation>
    <scope>NUCLEOTIDE SEQUENCE [LARGE SCALE GENOMIC DNA]</scope>
    <source>
        <strain>536 / UPEC</strain>
    </source>
</reference>
<organism>
    <name type="scientific">Escherichia coli O6:K15:H31 (strain 536 / UPEC)</name>
    <dbReference type="NCBI Taxonomy" id="362663"/>
    <lineage>
        <taxon>Bacteria</taxon>
        <taxon>Pseudomonadati</taxon>
        <taxon>Pseudomonadota</taxon>
        <taxon>Gammaproteobacteria</taxon>
        <taxon>Enterobacterales</taxon>
        <taxon>Enterobacteriaceae</taxon>
        <taxon>Escherichia</taxon>
    </lineage>
</organism>
<name>Y3853_ECOL5</name>
<evidence type="ECO:0000305" key="1"/>
<protein>
    <recommendedName>
        <fullName>UPF0401 protein ECP_3853</fullName>
    </recommendedName>
</protein>
<gene>
    <name type="ordered locus">ECP_3853</name>
</gene>
<proteinExistence type="inferred from homology"/>
<accession>Q0TB55</accession>
<dbReference type="EMBL" id="CP000247">
    <property type="protein sequence ID" value="ABG71824.1"/>
    <property type="molecule type" value="Genomic_DNA"/>
</dbReference>
<dbReference type="RefSeq" id="WP_001278287.1">
    <property type="nucleotide sequence ID" value="NC_008253.1"/>
</dbReference>
<dbReference type="SMR" id="Q0TB55"/>
<dbReference type="KEGG" id="ecp:ECP_3853"/>
<dbReference type="HOGENOM" id="CLU_182912_1_0_6"/>
<dbReference type="Proteomes" id="UP000009182">
    <property type="component" value="Chromosome"/>
</dbReference>
<dbReference type="Gene3D" id="3.30.160.130">
    <property type="entry name" value="ykff protein like domains"/>
    <property type="match status" value="1"/>
</dbReference>
<dbReference type="InterPro" id="IPR009253">
    <property type="entry name" value="DUF905"/>
</dbReference>
<dbReference type="InterPro" id="IPR038612">
    <property type="entry name" value="YkfF-like_sf"/>
</dbReference>
<dbReference type="Pfam" id="PF06006">
    <property type="entry name" value="DUF905"/>
    <property type="match status" value="1"/>
</dbReference>
<dbReference type="SUPFAM" id="SSF54786">
    <property type="entry name" value="YcfA/nrd intein domain"/>
    <property type="match status" value="1"/>
</dbReference>
<comment type="similarity">
    <text evidence="1">Belongs to the UPF0401 family.</text>
</comment>